<sequence length="248" mass="26840">MAGHSKWANIKHKKAKEDAKRGKIFTKLIREITVAARLGGGDKDANPRLRAAIATALANNMSKDTIERAVVKGAGGDESANVEEVRYEGYGPGGVAIIVDCMTDNRNRTVGEVRHAFTKSGGNLGTDGSVAYMFTKRGIISFAPGVDEDALMEVALEAGAEDIITHEDGSIDVYTDPHDFSDIQEVLIEKGFNSENAEVTFDAETKAELDTETAEKVMALIDKLEDLDDVQNVYSNANFTQELIEQIG</sequence>
<dbReference type="EMBL" id="AJ749949">
    <property type="protein sequence ID" value="CAG45288.1"/>
    <property type="molecule type" value="Genomic_DNA"/>
</dbReference>
<dbReference type="RefSeq" id="WP_003020411.1">
    <property type="nucleotide sequence ID" value="NC_006570.2"/>
</dbReference>
<dbReference type="RefSeq" id="YP_169673.1">
    <property type="nucleotide sequence ID" value="NC_006570.2"/>
</dbReference>
<dbReference type="SMR" id="Q5NH19"/>
<dbReference type="STRING" id="177416.FTT_0655"/>
<dbReference type="DNASU" id="3191062"/>
<dbReference type="EnsemblBacteria" id="CAG45288">
    <property type="protein sequence ID" value="CAG45288"/>
    <property type="gene ID" value="FTT_0655"/>
</dbReference>
<dbReference type="KEGG" id="ftu:FTT_0655"/>
<dbReference type="eggNOG" id="COG0217">
    <property type="taxonomic scope" value="Bacteria"/>
</dbReference>
<dbReference type="OrthoDB" id="9781053at2"/>
<dbReference type="Proteomes" id="UP000001174">
    <property type="component" value="Chromosome"/>
</dbReference>
<dbReference type="GO" id="GO:0005829">
    <property type="term" value="C:cytosol"/>
    <property type="evidence" value="ECO:0007669"/>
    <property type="project" value="TreeGrafter"/>
</dbReference>
<dbReference type="GO" id="GO:0003677">
    <property type="term" value="F:DNA binding"/>
    <property type="evidence" value="ECO:0007669"/>
    <property type="project" value="UniProtKB-UniRule"/>
</dbReference>
<dbReference type="GO" id="GO:0006355">
    <property type="term" value="P:regulation of DNA-templated transcription"/>
    <property type="evidence" value="ECO:0007669"/>
    <property type="project" value="UniProtKB-UniRule"/>
</dbReference>
<dbReference type="FunFam" id="1.10.10.200:FF:000001">
    <property type="entry name" value="Probable transcriptional regulatory protein YebC"/>
    <property type="match status" value="1"/>
</dbReference>
<dbReference type="FunFam" id="3.30.70.980:FF:000002">
    <property type="entry name" value="Probable transcriptional regulatory protein YebC"/>
    <property type="match status" value="1"/>
</dbReference>
<dbReference type="Gene3D" id="1.10.10.200">
    <property type="match status" value="1"/>
</dbReference>
<dbReference type="Gene3D" id="3.30.70.980">
    <property type="match status" value="2"/>
</dbReference>
<dbReference type="HAMAP" id="MF_00693">
    <property type="entry name" value="Transcrip_reg_TACO1"/>
    <property type="match status" value="1"/>
</dbReference>
<dbReference type="InterPro" id="IPR017856">
    <property type="entry name" value="Integrase-like_N"/>
</dbReference>
<dbReference type="InterPro" id="IPR048300">
    <property type="entry name" value="TACO1_YebC-like_2nd/3rd_dom"/>
</dbReference>
<dbReference type="InterPro" id="IPR049083">
    <property type="entry name" value="TACO1_YebC_N"/>
</dbReference>
<dbReference type="InterPro" id="IPR002876">
    <property type="entry name" value="Transcrip_reg_TACO1-like"/>
</dbReference>
<dbReference type="InterPro" id="IPR026564">
    <property type="entry name" value="Transcrip_reg_TACO1-like_dom3"/>
</dbReference>
<dbReference type="InterPro" id="IPR029072">
    <property type="entry name" value="YebC-like"/>
</dbReference>
<dbReference type="NCBIfam" id="NF001030">
    <property type="entry name" value="PRK00110.1"/>
    <property type="match status" value="1"/>
</dbReference>
<dbReference type="NCBIfam" id="NF009044">
    <property type="entry name" value="PRK12378.1"/>
    <property type="match status" value="1"/>
</dbReference>
<dbReference type="NCBIfam" id="TIGR01033">
    <property type="entry name" value="YebC/PmpR family DNA-binding transcriptional regulator"/>
    <property type="match status" value="1"/>
</dbReference>
<dbReference type="PANTHER" id="PTHR12532:SF6">
    <property type="entry name" value="TRANSCRIPTIONAL REGULATORY PROTEIN YEBC-RELATED"/>
    <property type="match status" value="1"/>
</dbReference>
<dbReference type="PANTHER" id="PTHR12532">
    <property type="entry name" value="TRANSLATIONAL ACTIVATOR OF CYTOCHROME C OXIDASE 1"/>
    <property type="match status" value="1"/>
</dbReference>
<dbReference type="Pfam" id="PF20772">
    <property type="entry name" value="TACO1_YebC_N"/>
    <property type="match status" value="1"/>
</dbReference>
<dbReference type="Pfam" id="PF01709">
    <property type="entry name" value="Transcrip_reg"/>
    <property type="match status" value="1"/>
</dbReference>
<dbReference type="SUPFAM" id="SSF75625">
    <property type="entry name" value="YebC-like"/>
    <property type="match status" value="1"/>
</dbReference>
<reference key="1">
    <citation type="journal article" date="2005" name="Nat. Genet.">
        <title>The complete genome sequence of Francisella tularensis, the causative agent of tularemia.</title>
        <authorList>
            <person name="Larsson P."/>
            <person name="Oyston P.C.F."/>
            <person name="Chain P."/>
            <person name="Chu M.C."/>
            <person name="Duffield M."/>
            <person name="Fuxelius H.-H."/>
            <person name="Garcia E."/>
            <person name="Haelltorp G."/>
            <person name="Johansson D."/>
            <person name="Isherwood K.E."/>
            <person name="Karp P.D."/>
            <person name="Larsson E."/>
            <person name="Liu Y."/>
            <person name="Michell S."/>
            <person name="Prior J."/>
            <person name="Prior R."/>
            <person name="Malfatti S."/>
            <person name="Sjoestedt A."/>
            <person name="Svensson K."/>
            <person name="Thompson N."/>
            <person name="Vergez L."/>
            <person name="Wagg J.K."/>
            <person name="Wren B.W."/>
            <person name="Lindler L.E."/>
            <person name="Andersson S.G.E."/>
            <person name="Forsman M."/>
            <person name="Titball R.W."/>
        </authorList>
    </citation>
    <scope>NUCLEOTIDE SEQUENCE [LARGE SCALE GENOMIC DNA]</scope>
    <source>
        <strain>SCHU S4 / Schu 4</strain>
    </source>
</reference>
<feature type="chain" id="PRO_0000175811" description="Probable transcriptional regulatory protein FTT_0655">
    <location>
        <begin position="1"/>
        <end position="248"/>
    </location>
</feature>
<protein>
    <recommendedName>
        <fullName evidence="1">Probable transcriptional regulatory protein FTT_0655</fullName>
    </recommendedName>
</protein>
<accession>Q5NH19</accession>
<keyword id="KW-0963">Cytoplasm</keyword>
<keyword id="KW-0238">DNA-binding</keyword>
<keyword id="KW-1185">Reference proteome</keyword>
<keyword id="KW-0804">Transcription</keyword>
<keyword id="KW-0805">Transcription regulation</keyword>
<name>Y655_FRATT</name>
<proteinExistence type="inferred from homology"/>
<comment type="subcellular location">
    <subcellularLocation>
        <location evidence="1">Cytoplasm</location>
    </subcellularLocation>
</comment>
<comment type="similarity">
    <text evidence="1">Belongs to the TACO1 family.</text>
</comment>
<evidence type="ECO:0000255" key="1">
    <source>
        <dbReference type="HAMAP-Rule" id="MF_00693"/>
    </source>
</evidence>
<gene>
    <name type="ordered locus">FTT_0655</name>
</gene>
<organism>
    <name type="scientific">Francisella tularensis subsp. tularensis (strain SCHU S4 / Schu 4)</name>
    <dbReference type="NCBI Taxonomy" id="177416"/>
    <lineage>
        <taxon>Bacteria</taxon>
        <taxon>Pseudomonadati</taxon>
        <taxon>Pseudomonadota</taxon>
        <taxon>Gammaproteobacteria</taxon>
        <taxon>Thiotrichales</taxon>
        <taxon>Francisellaceae</taxon>
        <taxon>Francisella</taxon>
    </lineage>
</organism>